<proteinExistence type="inferred from homology"/>
<keyword id="KW-0963">Cytoplasm</keyword>
<keyword id="KW-0274">FAD</keyword>
<keyword id="KW-0285">Flavoprotein</keyword>
<keyword id="KW-0520">NAD</keyword>
<keyword id="KW-0819">tRNA processing</keyword>
<evidence type="ECO:0000255" key="1">
    <source>
        <dbReference type="HAMAP-Rule" id="MF_00129"/>
    </source>
</evidence>
<name>MNMG_FRAT1</name>
<gene>
    <name evidence="1" type="primary">mnmG</name>
    <name evidence="1" type="synonym">gidA</name>
    <name type="ordered locus">FTF1205</name>
</gene>
<feature type="chain" id="PRO_1000016597" description="tRNA uridine 5-carboxymethylaminomethyl modification enzyme MnmG">
    <location>
        <begin position="1"/>
        <end position="627"/>
    </location>
</feature>
<feature type="binding site" evidence="1">
    <location>
        <begin position="13"/>
        <end position="18"/>
    </location>
    <ligand>
        <name>FAD</name>
        <dbReference type="ChEBI" id="CHEBI:57692"/>
    </ligand>
</feature>
<feature type="binding site" evidence="1">
    <location>
        <position position="125"/>
    </location>
    <ligand>
        <name>FAD</name>
        <dbReference type="ChEBI" id="CHEBI:57692"/>
    </ligand>
</feature>
<feature type="binding site" evidence="1">
    <location>
        <position position="180"/>
    </location>
    <ligand>
        <name>FAD</name>
        <dbReference type="ChEBI" id="CHEBI:57692"/>
    </ligand>
</feature>
<feature type="binding site" evidence="1">
    <location>
        <begin position="274"/>
        <end position="288"/>
    </location>
    <ligand>
        <name>NAD(+)</name>
        <dbReference type="ChEBI" id="CHEBI:57540"/>
    </ligand>
</feature>
<feature type="binding site" evidence="1">
    <location>
        <position position="371"/>
    </location>
    <ligand>
        <name>FAD</name>
        <dbReference type="ChEBI" id="CHEBI:57692"/>
    </ligand>
</feature>
<protein>
    <recommendedName>
        <fullName evidence="1">tRNA uridine 5-carboxymethylaminomethyl modification enzyme MnmG</fullName>
    </recommendedName>
    <alternativeName>
        <fullName evidence="1">Glucose-inhibited division protein A</fullName>
    </alternativeName>
</protein>
<organism>
    <name type="scientific">Francisella tularensis subsp. tularensis (strain FSC 198)</name>
    <dbReference type="NCBI Taxonomy" id="393115"/>
    <lineage>
        <taxon>Bacteria</taxon>
        <taxon>Pseudomonadati</taxon>
        <taxon>Pseudomonadota</taxon>
        <taxon>Gammaproteobacteria</taxon>
        <taxon>Thiotrichales</taxon>
        <taxon>Francisellaceae</taxon>
        <taxon>Francisella</taxon>
    </lineage>
</organism>
<sequence>MIYDYGYDVIVVGGGHAGVEAASASARIGAKTLLLTHNIDTIGQMSCNPAIGGIGKGHLVKEIDAMGGVMAKAIDMAGIQFRILNSRKGPAVRATRAQADRLLYKKAINSLINNQENLDIFQDSVDDLVVENNTVCGAITKTGITFRAKKVVLTVGTFLGGKIHIGKVSNAGGRAGDQPSNALAARLRSLPFRVDRLKTGTPPRIDRRSVDFSVMEVQHGDNPTPYFSFFSKGKIEHPRQIPCYITYTNNETHKIITDNLDKSAMYSGLIEGIGPRYCPSIEDKVVRFADKERHQIFVEPEGLNSIELYPNGLSTSLPFEVQCNYIRSIKGFEKAFIMRPGYAIEYDFFDPRDLKPTLETKHIKNLYFAGQINGTTGYEEAGAQGLVASINAAISIDSDKSWYPTRADSYIGVLIDDLITKGTKEPYRMFTSRAEYRLILREDNADLRLSNKACELGLLSKEDQQHFISKKNAIIENIAMMKNTWIGPQTQKARDLEKFLDKKMTRESTLFDLLKRPEIDYSKLQQISELNLNLQDDAVIEQIEISAKYSGYIERQNKDIEKTATFEQKAIPTDFNYSQVKGLSNEVLQKLTEQKPTTLGEASRIPGITPAAISLLTIYMKKTGFIK</sequence>
<dbReference type="EMBL" id="AM286280">
    <property type="protein sequence ID" value="CAL09221.1"/>
    <property type="molecule type" value="Genomic_DNA"/>
</dbReference>
<dbReference type="RefSeq" id="WP_003021460.1">
    <property type="nucleotide sequence ID" value="NC_008245.1"/>
</dbReference>
<dbReference type="SMR" id="Q14H30"/>
<dbReference type="KEGG" id="ftf:FTF1205"/>
<dbReference type="HOGENOM" id="CLU_007831_2_2_6"/>
<dbReference type="GO" id="GO:0005829">
    <property type="term" value="C:cytosol"/>
    <property type="evidence" value="ECO:0007669"/>
    <property type="project" value="TreeGrafter"/>
</dbReference>
<dbReference type="GO" id="GO:0050660">
    <property type="term" value="F:flavin adenine dinucleotide binding"/>
    <property type="evidence" value="ECO:0007669"/>
    <property type="project" value="UniProtKB-UniRule"/>
</dbReference>
<dbReference type="GO" id="GO:0030488">
    <property type="term" value="P:tRNA methylation"/>
    <property type="evidence" value="ECO:0007669"/>
    <property type="project" value="TreeGrafter"/>
</dbReference>
<dbReference type="GO" id="GO:0002098">
    <property type="term" value="P:tRNA wobble uridine modification"/>
    <property type="evidence" value="ECO:0007669"/>
    <property type="project" value="InterPro"/>
</dbReference>
<dbReference type="FunFam" id="1.10.10.1800:FF:000001">
    <property type="entry name" value="tRNA uridine 5-carboxymethylaminomethyl modification enzyme MnmG"/>
    <property type="match status" value="1"/>
</dbReference>
<dbReference type="FunFam" id="1.10.150.570:FF:000001">
    <property type="entry name" value="tRNA uridine 5-carboxymethylaminomethyl modification enzyme MnmG"/>
    <property type="match status" value="1"/>
</dbReference>
<dbReference type="FunFam" id="3.50.50.60:FF:000002">
    <property type="entry name" value="tRNA uridine 5-carboxymethylaminomethyl modification enzyme MnmG"/>
    <property type="match status" value="1"/>
</dbReference>
<dbReference type="FunFam" id="3.50.50.60:FF:000010">
    <property type="entry name" value="tRNA uridine 5-carboxymethylaminomethyl modification enzyme MnmG"/>
    <property type="match status" value="1"/>
</dbReference>
<dbReference type="Gene3D" id="3.50.50.60">
    <property type="entry name" value="FAD/NAD(P)-binding domain"/>
    <property type="match status" value="2"/>
</dbReference>
<dbReference type="Gene3D" id="1.10.150.570">
    <property type="entry name" value="GidA associated domain, C-terminal subdomain"/>
    <property type="match status" value="1"/>
</dbReference>
<dbReference type="Gene3D" id="1.10.10.1800">
    <property type="entry name" value="tRNA uridine 5-carboxymethylaminomethyl modification enzyme MnmG/GidA"/>
    <property type="match status" value="1"/>
</dbReference>
<dbReference type="HAMAP" id="MF_00129">
    <property type="entry name" value="MnmG_GidA"/>
    <property type="match status" value="1"/>
</dbReference>
<dbReference type="InterPro" id="IPR036188">
    <property type="entry name" value="FAD/NAD-bd_sf"/>
</dbReference>
<dbReference type="InterPro" id="IPR049312">
    <property type="entry name" value="GIDA_C_N"/>
</dbReference>
<dbReference type="InterPro" id="IPR004416">
    <property type="entry name" value="MnmG"/>
</dbReference>
<dbReference type="InterPro" id="IPR002218">
    <property type="entry name" value="MnmG-rel"/>
</dbReference>
<dbReference type="InterPro" id="IPR020595">
    <property type="entry name" value="MnmG-rel_CS"/>
</dbReference>
<dbReference type="InterPro" id="IPR026904">
    <property type="entry name" value="MnmG_C"/>
</dbReference>
<dbReference type="InterPro" id="IPR047001">
    <property type="entry name" value="MnmG_C_subdom"/>
</dbReference>
<dbReference type="InterPro" id="IPR044920">
    <property type="entry name" value="MnmG_C_subdom_sf"/>
</dbReference>
<dbReference type="InterPro" id="IPR040131">
    <property type="entry name" value="MnmG_N"/>
</dbReference>
<dbReference type="NCBIfam" id="TIGR00136">
    <property type="entry name" value="mnmG_gidA"/>
    <property type="match status" value="1"/>
</dbReference>
<dbReference type="PANTHER" id="PTHR11806">
    <property type="entry name" value="GLUCOSE INHIBITED DIVISION PROTEIN A"/>
    <property type="match status" value="1"/>
</dbReference>
<dbReference type="PANTHER" id="PTHR11806:SF0">
    <property type="entry name" value="PROTEIN MTO1 HOMOLOG, MITOCHONDRIAL"/>
    <property type="match status" value="1"/>
</dbReference>
<dbReference type="Pfam" id="PF01134">
    <property type="entry name" value="GIDA"/>
    <property type="match status" value="1"/>
</dbReference>
<dbReference type="Pfam" id="PF21680">
    <property type="entry name" value="GIDA_C_1st"/>
    <property type="match status" value="1"/>
</dbReference>
<dbReference type="Pfam" id="PF13932">
    <property type="entry name" value="SAM_GIDA_C"/>
    <property type="match status" value="1"/>
</dbReference>
<dbReference type="SMART" id="SM01228">
    <property type="entry name" value="GIDA_assoc_3"/>
    <property type="match status" value="1"/>
</dbReference>
<dbReference type="SUPFAM" id="SSF51905">
    <property type="entry name" value="FAD/NAD(P)-binding domain"/>
    <property type="match status" value="1"/>
</dbReference>
<dbReference type="PROSITE" id="PS01280">
    <property type="entry name" value="GIDA_1"/>
    <property type="match status" value="1"/>
</dbReference>
<reference key="1">
    <citation type="journal article" date="2007" name="PLoS ONE">
        <title>Genome sequencing shows that European isolates of Francisella tularensis subspecies tularensis are almost identical to US laboratory strain Schu S4.</title>
        <authorList>
            <person name="Chaudhuri R.R."/>
            <person name="Ren C.-P."/>
            <person name="Desmond L."/>
            <person name="Vincent G.A."/>
            <person name="Silman N.J."/>
            <person name="Brehm J.K."/>
            <person name="Elmore M.J."/>
            <person name="Hudson M.J."/>
            <person name="Forsman M."/>
            <person name="Isherwood K.E."/>
            <person name="Gurycova D."/>
            <person name="Minton N.P."/>
            <person name="Titball R.W."/>
            <person name="Pallen M.J."/>
            <person name="Vipond R."/>
        </authorList>
    </citation>
    <scope>NUCLEOTIDE SEQUENCE [LARGE SCALE GENOMIC DNA]</scope>
    <source>
        <strain>FSC 198</strain>
    </source>
</reference>
<comment type="function">
    <text evidence="1">NAD-binding protein involved in the addition of a carboxymethylaminomethyl (cmnm) group at the wobble position (U34) of certain tRNAs, forming tRNA-cmnm(5)s(2)U34.</text>
</comment>
<comment type="cofactor">
    <cofactor evidence="1">
        <name>FAD</name>
        <dbReference type="ChEBI" id="CHEBI:57692"/>
    </cofactor>
</comment>
<comment type="subunit">
    <text evidence="1">Homodimer. Heterotetramer of two MnmE and two MnmG subunits.</text>
</comment>
<comment type="subcellular location">
    <subcellularLocation>
        <location evidence="1">Cytoplasm</location>
    </subcellularLocation>
</comment>
<comment type="similarity">
    <text evidence="1">Belongs to the MnmG family.</text>
</comment>
<accession>Q14H30</accession>